<reference key="1">
    <citation type="journal article" date="1996" name="Science">
        <title>Complete genome sequence of the methanogenic archaeon, Methanococcus jannaschii.</title>
        <authorList>
            <person name="Bult C.J."/>
            <person name="White O."/>
            <person name="Olsen G.J."/>
            <person name="Zhou L."/>
            <person name="Fleischmann R.D."/>
            <person name="Sutton G.G."/>
            <person name="Blake J.A."/>
            <person name="FitzGerald L.M."/>
            <person name="Clayton R.A."/>
            <person name="Gocayne J.D."/>
            <person name="Kerlavage A.R."/>
            <person name="Dougherty B.A."/>
            <person name="Tomb J.-F."/>
            <person name="Adams M.D."/>
            <person name="Reich C.I."/>
            <person name="Overbeek R."/>
            <person name="Kirkness E.F."/>
            <person name="Weinstock K.G."/>
            <person name="Merrick J.M."/>
            <person name="Glodek A."/>
            <person name="Scott J.L."/>
            <person name="Geoghagen N.S.M."/>
            <person name="Weidman J.F."/>
            <person name="Fuhrmann J.L."/>
            <person name="Nguyen D."/>
            <person name="Utterback T.R."/>
            <person name="Kelley J.M."/>
            <person name="Peterson J.D."/>
            <person name="Sadow P.W."/>
            <person name="Hanna M.C."/>
            <person name="Cotton M.D."/>
            <person name="Roberts K.M."/>
            <person name="Hurst M.A."/>
            <person name="Kaine B.P."/>
            <person name="Borodovsky M."/>
            <person name="Klenk H.-P."/>
            <person name="Fraser C.M."/>
            <person name="Smith H.O."/>
            <person name="Woese C.R."/>
            <person name="Venter J.C."/>
        </authorList>
    </citation>
    <scope>NUCLEOTIDE SEQUENCE [LARGE SCALE GENOMIC DNA]</scope>
    <source>
        <strain>ATCC 43067 / DSM 2661 / JAL-1 / JCM 10045 / NBRC 100440</strain>
    </source>
</reference>
<reference key="2">
    <citation type="journal article" date="2006" name="Biochemistry">
        <title>Methylglyoxal is an intermediate in the biosynthesis of 6-deoxy-5-ketofructose-1-phosphate: a precursor for aromatic amino acid biosynthesis in Methanocaldococcus jannaschii.</title>
        <authorList>
            <person name="White R.H."/>
            <person name="Xu H."/>
        </authorList>
    </citation>
    <scope>FUNCTION AS A PHOSPHOMANNOMUTASE</scope>
    <scope>SUBSTRATE SPECIFICITY</scope>
    <scope>CATALYTIC ACTIVITY</scope>
    <scope>PATHWAY</scope>
</reference>
<name>MANB_METJA</name>
<proteinExistence type="evidence at protein level"/>
<organism>
    <name type="scientific">Methanocaldococcus jannaschii (strain ATCC 43067 / DSM 2661 / JAL-1 / JCM 10045 / NBRC 100440)</name>
    <name type="common">Methanococcus jannaschii</name>
    <dbReference type="NCBI Taxonomy" id="243232"/>
    <lineage>
        <taxon>Archaea</taxon>
        <taxon>Methanobacteriati</taxon>
        <taxon>Methanobacteriota</taxon>
        <taxon>Methanomada group</taxon>
        <taxon>Methanococci</taxon>
        <taxon>Methanococcales</taxon>
        <taxon>Methanocaldococcaceae</taxon>
        <taxon>Methanocaldococcus</taxon>
    </lineage>
</organism>
<evidence type="ECO:0000250" key="1">
    <source>
        <dbReference type="UniProtKB" id="P26276"/>
    </source>
</evidence>
<evidence type="ECO:0000269" key="2">
    <source>
    </source>
</evidence>
<evidence type="ECO:0000303" key="3">
    <source>
    </source>
</evidence>
<evidence type="ECO:0000305" key="4"/>
<evidence type="ECO:0000305" key="5">
    <source>
    </source>
</evidence>
<feature type="chain" id="PRO_0000147831" description="Phosphomannomutase">
    <location>
        <begin position="1"/>
        <end position="449"/>
    </location>
</feature>
<feature type="active site" description="Phosphoserine intermediate" evidence="1">
    <location>
        <position position="97"/>
    </location>
</feature>
<feature type="binding site" description="via phosphate group" evidence="1">
    <location>
        <position position="97"/>
    </location>
    <ligand>
        <name>Mg(2+)</name>
        <dbReference type="ChEBI" id="CHEBI:18420"/>
    </ligand>
</feature>
<feature type="binding site" evidence="1">
    <location>
        <position position="237"/>
    </location>
    <ligand>
        <name>Mg(2+)</name>
        <dbReference type="ChEBI" id="CHEBI:18420"/>
    </ligand>
</feature>
<feature type="binding site" evidence="1">
    <location>
        <position position="239"/>
    </location>
    <ligand>
        <name>Mg(2+)</name>
        <dbReference type="ChEBI" id="CHEBI:18420"/>
    </ligand>
</feature>
<feature type="binding site" evidence="1">
    <location>
        <position position="241"/>
    </location>
    <ligand>
        <name>Mg(2+)</name>
        <dbReference type="ChEBI" id="CHEBI:18420"/>
    </ligand>
</feature>
<sequence length="449" mass="51474">MFGDLMVFKAYDIRGIYGRELDENFAYSLGKCIGKKFENKKILVGNDVRIGSKELLPYFIVGLKEYADVFYAGTISTPLMYFGTKGKYDLGVILTASHNPPEYTGFKMCDKEAIPLSPIEEIKPIFKKYELTESIKEEAKNLNLDDLKVNIIEEYKKFFLKRCKASDKKIAVDFANGATTIAEKEILNELFDNAVFINDYPDGNFPAHQPDTLKMECLKDIIRAVKKNNCELGLIFDGDGDRLGIVDENGNVLRGDILTAIIAKEILKEKSNAKIVYDLRCSKIVPEIIEKYGGIAIKSRVGHYFIKKLMHEIDAEFAGELSNHFYFKEIGYFESPLLALNYILKAMDEENKSLSELNKEFSKYPHSGEINFRVKDQKYIMEKIKEHFKDCKLEELDGISIYCKNFWFNLRPSNTEPLLRLNLEADDEKTMKEKVEEIKNLIAKLDASL</sequence>
<dbReference type="EC" id="5.4.2.8" evidence="2"/>
<dbReference type="EMBL" id="L77117">
    <property type="protein sequence ID" value="AAB98388.1"/>
    <property type="molecule type" value="Genomic_DNA"/>
</dbReference>
<dbReference type="PIR" id="G64349">
    <property type="entry name" value="G64349"/>
</dbReference>
<dbReference type="SMR" id="Q57842"/>
<dbReference type="FunCoup" id="Q57842">
    <property type="interactions" value="85"/>
</dbReference>
<dbReference type="STRING" id="243232.MJ_0399"/>
<dbReference type="PaxDb" id="243232-MJ_0399"/>
<dbReference type="EnsemblBacteria" id="AAB98388">
    <property type="protein sequence ID" value="AAB98388"/>
    <property type="gene ID" value="MJ_0399"/>
</dbReference>
<dbReference type="KEGG" id="mja:MJ_0399"/>
<dbReference type="eggNOG" id="arCOG00767">
    <property type="taxonomic scope" value="Archaea"/>
</dbReference>
<dbReference type="HOGENOM" id="CLU_016950_9_2_2"/>
<dbReference type="InParanoid" id="Q57842"/>
<dbReference type="PhylomeDB" id="Q57842"/>
<dbReference type="Proteomes" id="UP000000805">
    <property type="component" value="Chromosome"/>
</dbReference>
<dbReference type="GO" id="GO:0000287">
    <property type="term" value="F:magnesium ion binding"/>
    <property type="evidence" value="ECO:0007669"/>
    <property type="project" value="InterPro"/>
</dbReference>
<dbReference type="GO" id="GO:0004615">
    <property type="term" value="F:phosphomannomutase activity"/>
    <property type="evidence" value="ECO:0000314"/>
    <property type="project" value="UniProtKB"/>
</dbReference>
<dbReference type="GO" id="GO:0005975">
    <property type="term" value="P:carbohydrate metabolic process"/>
    <property type="evidence" value="ECO:0007669"/>
    <property type="project" value="InterPro"/>
</dbReference>
<dbReference type="CDD" id="cd03089">
    <property type="entry name" value="PMM_PGM"/>
    <property type="match status" value="1"/>
</dbReference>
<dbReference type="FunFam" id="3.40.120.10:FF:000082">
    <property type="entry name" value="Phosphomannomutase"/>
    <property type="match status" value="1"/>
</dbReference>
<dbReference type="Gene3D" id="3.40.120.10">
    <property type="entry name" value="Alpha-D-Glucose-1,6-Bisphosphate, subunit A, domain 3"/>
    <property type="match status" value="3"/>
</dbReference>
<dbReference type="Gene3D" id="3.30.310.50">
    <property type="entry name" value="Alpha-D-phosphohexomutase, C-terminal domain"/>
    <property type="match status" value="1"/>
</dbReference>
<dbReference type="InterPro" id="IPR005844">
    <property type="entry name" value="A-D-PHexomutase_a/b/a-I"/>
</dbReference>
<dbReference type="InterPro" id="IPR016055">
    <property type="entry name" value="A-D-PHexomutase_a/b/a-I/II/III"/>
</dbReference>
<dbReference type="InterPro" id="IPR005845">
    <property type="entry name" value="A-D-PHexomutase_a/b/a-II"/>
</dbReference>
<dbReference type="InterPro" id="IPR005846">
    <property type="entry name" value="A-D-PHexomutase_a/b/a-III"/>
</dbReference>
<dbReference type="InterPro" id="IPR005843">
    <property type="entry name" value="A-D-PHexomutase_C"/>
</dbReference>
<dbReference type="InterPro" id="IPR036900">
    <property type="entry name" value="A-D-PHexomutase_C_sf"/>
</dbReference>
<dbReference type="InterPro" id="IPR016066">
    <property type="entry name" value="A-D-PHexomutase_CS"/>
</dbReference>
<dbReference type="InterPro" id="IPR005841">
    <property type="entry name" value="Alpha-D-phosphohexomutase_SF"/>
</dbReference>
<dbReference type="PANTHER" id="PTHR43771">
    <property type="entry name" value="PHOSPHOMANNOMUTASE"/>
    <property type="match status" value="1"/>
</dbReference>
<dbReference type="PANTHER" id="PTHR43771:SF1">
    <property type="entry name" value="PHOSPHOMANNOMUTASE"/>
    <property type="match status" value="1"/>
</dbReference>
<dbReference type="Pfam" id="PF02878">
    <property type="entry name" value="PGM_PMM_I"/>
    <property type="match status" value="1"/>
</dbReference>
<dbReference type="Pfam" id="PF02879">
    <property type="entry name" value="PGM_PMM_II"/>
    <property type="match status" value="1"/>
</dbReference>
<dbReference type="Pfam" id="PF02880">
    <property type="entry name" value="PGM_PMM_III"/>
    <property type="match status" value="1"/>
</dbReference>
<dbReference type="Pfam" id="PF00408">
    <property type="entry name" value="PGM_PMM_IV"/>
    <property type="match status" value="1"/>
</dbReference>
<dbReference type="PRINTS" id="PR00509">
    <property type="entry name" value="PGMPMM"/>
</dbReference>
<dbReference type="SUPFAM" id="SSF55957">
    <property type="entry name" value="Phosphoglucomutase, C-terminal domain"/>
    <property type="match status" value="1"/>
</dbReference>
<dbReference type="SUPFAM" id="SSF53738">
    <property type="entry name" value="Phosphoglucomutase, first 3 domains"/>
    <property type="match status" value="3"/>
</dbReference>
<dbReference type="PROSITE" id="PS00710">
    <property type="entry name" value="PGM_PMM"/>
    <property type="match status" value="1"/>
</dbReference>
<comment type="function">
    <text evidence="2">Catalyzes the formation of mannose-1-P from mannose-6-P. Can also use glucose-6-P.</text>
</comment>
<comment type="catalytic activity">
    <reaction evidence="2">
        <text>alpha-D-mannose 1-phosphate = D-mannose 6-phosphate</text>
        <dbReference type="Rhea" id="RHEA:11140"/>
        <dbReference type="ChEBI" id="CHEBI:58409"/>
        <dbReference type="ChEBI" id="CHEBI:58735"/>
        <dbReference type="EC" id="5.4.2.8"/>
    </reaction>
    <physiologicalReaction direction="right-to-left" evidence="2">
        <dbReference type="Rhea" id="RHEA:11142"/>
    </physiologicalReaction>
</comment>
<comment type="cofactor">
    <cofactor evidence="1">
        <name>Mg(2+)</name>
        <dbReference type="ChEBI" id="CHEBI:18420"/>
    </cofactor>
    <text evidence="1">Binds 1 Mg(2+) ion per subunit.</text>
</comment>
<comment type="pathway">
    <text evidence="5">Amino-acid biosynthesis.</text>
</comment>
<comment type="similarity">
    <text evidence="4">Belongs to the phosphohexose mutase family.</text>
</comment>
<keyword id="KW-0413">Isomerase</keyword>
<keyword id="KW-0460">Magnesium</keyword>
<keyword id="KW-0479">Metal-binding</keyword>
<keyword id="KW-0597">Phosphoprotein</keyword>
<keyword id="KW-1185">Reference proteome</keyword>
<protein>
    <recommendedName>
        <fullName evidence="3">Phosphomannomutase</fullName>
        <shortName>PMM</shortName>
        <ecNumber evidence="2">5.4.2.8</ecNumber>
    </recommendedName>
    <alternativeName>
        <fullName evidence="3">Phosphoglucomutase</fullName>
    </alternativeName>
</protein>
<gene>
    <name type="primary">manB</name>
    <name type="ordered locus">MJ0399</name>
</gene>
<accession>Q57842</accession>